<organism>
    <name type="scientific">Chaetodipus eremicus</name>
    <name type="common">Chihuahuan pocket mouse</name>
    <dbReference type="NCBI Taxonomy" id="145409"/>
    <lineage>
        <taxon>Eukaryota</taxon>
        <taxon>Metazoa</taxon>
        <taxon>Chordata</taxon>
        <taxon>Craniata</taxon>
        <taxon>Vertebrata</taxon>
        <taxon>Euteleostomi</taxon>
        <taxon>Mammalia</taxon>
        <taxon>Eutheria</taxon>
        <taxon>Euarchontoglires</taxon>
        <taxon>Glires</taxon>
        <taxon>Rodentia</taxon>
        <taxon>Castorimorpha</taxon>
        <taxon>Heteromyidae</taxon>
        <taxon>Perognathinae</taxon>
        <taxon>Chaetodipus</taxon>
    </lineage>
</organism>
<sequence length="379" mass="42801">MTIMRKSHPLMKMVNHAFIDLPAPSNISSWWNFGSLLGLCLIIQIASGLFLAMHYTSDTISAFSSVAHICRDVNYGWLIRYIHANGASLFFICLYLHIGRGIYYGSYLYKETWNIGIMLLFLTMATAFMGYVLPWGQMSFWGATVITNLLSAIPYVGTDLVEWIWGGFSVDKATLTRFFAFHFILPFIIAATAMVHLLFLHETGSNNPLGIPSDSDKIPFHPYYTLKDFLGVILVLALFLTFVLFFPDLLGDPDNYSPANPLNTPPHIKPEWYFLFAYAILRSIPNKLGGVIALVLSILVLALFPLLHTANQRSMMFRPISQFLFWTLVSDLFILTWIGGQPVEPPFIIIGQIASILYFSIILLLLPIAGLIENKILKW</sequence>
<protein>
    <recommendedName>
        <fullName>Cytochrome b</fullName>
    </recommendedName>
    <alternativeName>
        <fullName>Complex III subunit 3</fullName>
    </alternativeName>
    <alternativeName>
        <fullName>Complex III subunit III</fullName>
    </alternativeName>
    <alternativeName>
        <fullName>Cytochrome b-c1 complex subunit 3</fullName>
    </alternativeName>
    <alternativeName>
        <fullName>Ubiquinol-cytochrome-c reductase complex cytochrome b subunit</fullName>
    </alternativeName>
</protein>
<reference key="1">
    <citation type="journal article" date="2005" name="J. Mammal.">
        <title>Phylogenetics of the new world rodent family Heteromyidae.</title>
        <authorList>
            <person name="Alexander L.F."/>
            <person name="Riddle B.R."/>
        </authorList>
    </citation>
    <scope>NUCLEOTIDE SEQUENCE [GENOMIC DNA]</scope>
    <source>
        <strain>Isolate LVT 1160</strain>
    </source>
</reference>
<keyword id="KW-0249">Electron transport</keyword>
<keyword id="KW-0349">Heme</keyword>
<keyword id="KW-0408">Iron</keyword>
<keyword id="KW-0472">Membrane</keyword>
<keyword id="KW-0479">Metal-binding</keyword>
<keyword id="KW-0496">Mitochondrion</keyword>
<keyword id="KW-0999">Mitochondrion inner membrane</keyword>
<keyword id="KW-0679">Respiratory chain</keyword>
<keyword id="KW-0812">Transmembrane</keyword>
<keyword id="KW-1133">Transmembrane helix</keyword>
<keyword id="KW-0813">Transport</keyword>
<keyword id="KW-0830">Ubiquinone</keyword>
<comment type="function">
    <text evidence="2">Component of the ubiquinol-cytochrome c reductase complex (complex III or cytochrome b-c1 complex) that is part of the mitochondrial respiratory chain. The b-c1 complex mediates electron transfer from ubiquinol to cytochrome c. Contributes to the generation of a proton gradient across the mitochondrial membrane that is then used for ATP synthesis.</text>
</comment>
<comment type="cofactor">
    <cofactor evidence="2">
        <name>heme b</name>
        <dbReference type="ChEBI" id="CHEBI:60344"/>
    </cofactor>
    <text evidence="2">Binds 2 heme b groups non-covalently.</text>
</comment>
<comment type="subunit">
    <text evidence="2">The cytochrome bc1 complex contains 11 subunits: 3 respiratory subunits (MT-CYB, CYC1 and UQCRFS1), 2 core proteins (UQCRC1 and UQCRC2) and 6 low-molecular weight proteins (UQCRH/QCR6, UQCRB/QCR7, UQCRQ/QCR8, UQCR10/QCR9, UQCR11/QCR10 and a cleavage product of UQCRFS1). This cytochrome bc1 complex then forms a dimer.</text>
</comment>
<comment type="subcellular location">
    <subcellularLocation>
        <location evidence="2">Mitochondrion inner membrane</location>
        <topology evidence="2">Multi-pass membrane protein</topology>
    </subcellularLocation>
</comment>
<comment type="miscellaneous">
    <text evidence="1">Heme 1 (or BL or b562) is low-potential and absorbs at about 562 nm, and heme 2 (or BH or b566) is high-potential and absorbs at about 566 nm.</text>
</comment>
<comment type="similarity">
    <text evidence="3 4">Belongs to the cytochrome b family.</text>
</comment>
<comment type="caution">
    <text evidence="2">The full-length protein contains only eight transmembrane helices, not nine as predicted by bioinformatics tools.</text>
</comment>
<proteinExistence type="inferred from homology"/>
<name>CYB_CHAER</name>
<gene>
    <name type="primary">MT-CYB</name>
    <name type="synonym">COB</name>
    <name type="synonym">CYTB</name>
    <name type="synonym">MTCYB</name>
</gene>
<feature type="chain" id="PRO_0000254996" description="Cytochrome b">
    <location>
        <begin position="1"/>
        <end position="379"/>
    </location>
</feature>
<feature type="transmembrane region" description="Helical" evidence="2">
    <location>
        <begin position="33"/>
        <end position="53"/>
    </location>
</feature>
<feature type="transmembrane region" description="Helical" evidence="2">
    <location>
        <begin position="77"/>
        <end position="98"/>
    </location>
</feature>
<feature type="transmembrane region" description="Helical" evidence="2">
    <location>
        <begin position="113"/>
        <end position="133"/>
    </location>
</feature>
<feature type="transmembrane region" description="Helical" evidence="2">
    <location>
        <begin position="178"/>
        <end position="198"/>
    </location>
</feature>
<feature type="transmembrane region" description="Helical" evidence="2">
    <location>
        <begin position="226"/>
        <end position="246"/>
    </location>
</feature>
<feature type="transmembrane region" description="Helical" evidence="2">
    <location>
        <begin position="288"/>
        <end position="308"/>
    </location>
</feature>
<feature type="transmembrane region" description="Helical" evidence="2">
    <location>
        <begin position="320"/>
        <end position="340"/>
    </location>
</feature>
<feature type="transmembrane region" description="Helical" evidence="2">
    <location>
        <begin position="347"/>
        <end position="367"/>
    </location>
</feature>
<feature type="binding site" description="axial binding residue" evidence="2">
    <location>
        <position position="83"/>
    </location>
    <ligand>
        <name>heme b</name>
        <dbReference type="ChEBI" id="CHEBI:60344"/>
        <label>b562</label>
    </ligand>
    <ligandPart>
        <name>Fe</name>
        <dbReference type="ChEBI" id="CHEBI:18248"/>
    </ligandPart>
</feature>
<feature type="binding site" description="axial binding residue" evidence="2">
    <location>
        <position position="97"/>
    </location>
    <ligand>
        <name>heme b</name>
        <dbReference type="ChEBI" id="CHEBI:60344"/>
        <label>b566</label>
    </ligand>
    <ligandPart>
        <name>Fe</name>
        <dbReference type="ChEBI" id="CHEBI:18248"/>
    </ligandPart>
</feature>
<feature type="binding site" description="axial binding residue" evidence="2">
    <location>
        <position position="182"/>
    </location>
    <ligand>
        <name>heme b</name>
        <dbReference type="ChEBI" id="CHEBI:60344"/>
        <label>b562</label>
    </ligand>
    <ligandPart>
        <name>Fe</name>
        <dbReference type="ChEBI" id="CHEBI:18248"/>
    </ligandPart>
</feature>
<feature type="binding site" description="axial binding residue" evidence="2">
    <location>
        <position position="196"/>
    </location>
    <ligand>
        <name>heme b</name>
        <dbReference type="ChEBI" id="CHEBI:60344"/>
        <label>b566</label>
    </ligand>
    <ligandPart>
        <name>Fe</name>
        <dbReference type="ChEBI" id="CHEBI:18248"/>
    </ligandPart>
</feature>
<feature type="binding site" evidence="2">
    <location>
        <position position="201"/>
    </location>
    <ligand>
        <name>a ubiquinone</name>
        <dbReference type="ChEBI" id="CHEBI:16389"/>
    </ligand>
</feature>
<evidence type="ECO:0000250" key="1"/>
<evidence type="ECO:0000250" key="2">
    <source>
        <dbReference type="UniProtKB" id="P00157"/>
    </source>
</evidence>
<evidence type="ECO:0000255" key="3">
    <source>
        <dbReference type="PROSITE-ProRule" id="PRU00967"/>
    </source>
</evidence>
<evidence type="ECO:0000255" key="4">
    <source>
        <dbReference type="PROSITE-ProRule" id="PRU00968"/>
    </source>
</evidence>
<accession>Q508L1</accession>
<geneLocation type="mitochondrion"/>
<dbReference type="EMBL" id="AY926392">
    <property type="protein sequence ID" value="AAY23235.1"/>
    <property type="molecule type" value="Genomic_DNA"/>
</dbReference>
<dbReference type="SMR" id="Q508L1"/>
<dbReference type="GO" id="GO:0005743">
    <property type="term" value="C:mitochondrial inner membrane"/>
    <property type="evidence" value="ECO:0007669"/>
    <property type="project" value="UniProtKB-SubCell"/>
</dbReference>
<dbReference type="GO" id="GO:0045275">
    <property type="term" value="C:respiratory chain complex III"/>
    <property type="evidence" value="ECO:0007669"/>
    <property type="project" value="InterPro"/>
</dbReference>
<dbReference type="GO" id="GO:0046872">
    <property type="term" value="F:metal ion binding"/>
    <property type="evidence" value="ECO:0007669"/>
    <property type="project" value="UniProtKB-KW"/>
</dbReference>
<dbReference type="GO" id="GO:0008121">
    <property type="term" value="F:ubiquinol-cytochrome-c reductase activity"/>
    <property type="evidence" value="ECO:0007669"/>
    <property type="project" value="InterPro"/>
</dbReference>
<dbReference type="GO" id="GO:0006122">
    <property type="term" value="P:mitochondrial electron transport, ubiquinol to cytochrome c"/>
    <property type="evidence" value="ECO:0007669"/>
    <property type="project" value="TreeGrafter"/>
</dbReference>
<dbReference type="CDD" id="cd00290">
    <property type="entry name" value="cytochrome_b_C"/>
    <property type="match status" value="1"/>
</dbReference>
<dbReference type="CDD" id="cd00284">
    <property type="entry name" value="Cytochrome_b_N"/>
    <property type="match status" value="1"/>
</dbReference>
<dbReference type="FunFam" id="1.20.810.10:FF:000002">
    <property type="entry name" value="Cytochrome b"/>
    <property type="match status" value="1"/>
</dbReference>
<dbReference type="Gene3D" id="1.20.810.10">
    <property type="entry name" value="Cytochrome Bc1 Complex, Chain C"/>
    <property type="match status" value="1"/>
</dbReference>
<dbReference type="InterPro" id="IPR005798">
    <property type="entry name" value="Cyt_b/b6_C"/>
</dbReference>
<dbReference type="InterPro" id="IPR036150">
    <property type="entry name" value="Cyt_b/b6_C_sf"/>
</dbReference>
<dbReference type="InterPro" id="IPR005797">
    <property type="entry name" value="Cyt_b/b6_N"/>
</dbReference>
<dbReference type="InterPro" id="IPR027387">
    <property type="entry name" value="Cytb/b6-like_sf"/>
</dbReference>
<dbReference type="InterPro" id="IPR030689">
    <property type="entry name" value="Cytochrome_b"/>
</dbReference>
<dbReference type="InterPro" id="IPR048260">
    <property type="entry name" value="Cytochrome_b_C_euk/bac"/>
</dbReference>
<dbReference type="InterPro" id="IPR048259">
    <property type="entry name" value="Cytochrome_b_N_euk/bac"/>
</dbReference>
<dbReference type="InterPro" id="IPR016174">
    <property type="entry name" value="Di-haem_cyt_TM"/>
</dbReference>
<dbReference type="PANTHER" id="PTHR19271">
    <property type="entry name" value="CYTOCHROME B"/>
    <property type="match status" value="1"/>
</dbReference>
<dbReference type="PANTHER" id="PTHR19271:SF16">
    <property type="entry name" value="CYTOCHROME B"/>
    <property type="match status" value="1"/>
</dbReference>
<dbReference type="Pfam" id="PF00032">
    <property type="entry name" value="Cytochrom_B_C"/>
    <property type="match status" value="1"/>
</dbReference>
<dbReference type="Pfam" id="PF00033">
    <property type="entry name" value="Cytochrome_B"/>
    <property type="match status" value="1"/>
</dbReference>
<dbReference type="PIRSF" id="PIRSF038885">
    <property type="entry name" value="COB"/>
    <property type="match status" value="1"/>
</dbReference>
<dbReference type="SUPFAM" id="SSF81648">
    <property type="entry name" value="a domain/subunit of cytochrome bc1 complex (Ubiquinol-cytochrome c reductase)"/>
    <property type="match status" value="1"/>
</dbReference>
<dbReference type="SUPFAM" id="SSF81342">
    <property type="entry name" value="Transmembrane di-heme cytochromes"/>
    <property type="match status" value="1"/>
</dbReference>
<dbReference type="PROSITE" id="PS51003">
    <property type="entry name" value="CYTB_CTER"/>
    <property type="match status" value="1"/>
</dbReference>
<dbReference type="PROSITE" id="PS51002">
    <property type="entry name" value="CYTB_NTER"/>
    <property type="match status" value="1"/>
</dbReference>